<evidence type="ECO:0000255" key="1">
    <source>
        <dbReference type="HAMAP-Rule" id="MF_00123"/>
    </source>
</evidence>
<comment type="catalytic activity">
    <reaction evidence="1">
        <text>tRNA(Arg) + L-arginine + ATP = L-arginyl-tRNA(Arg) + AMP + diphosphate</text>
        <dbReference type="Rhea" id="RHEA:20301"/>
        <dbReference type="Rhea" id="RHEA-COMP:9658"/>
        <dbReference type="Rhea" id="RHEA-COMP:9673"/>
        <dbReference type="ChEBI" id="CHEBI:30616"/>
        <dbReference type="ChEBI" id="CHEBI:32682"/>
        <dbReference type="ChEBI" id="CHEBI:33019"/>
        <dbReference type="ChEBI" id="CHEBI:78442"/>
        <dbReference type="ChEBI" id="CHEBI:78513"/>
        <dbReference type="ChEBI" id="CHEBI:456215"/>
        <dbReference type="EC" id="6.1.1.19"/>
    </reaction>
</comment>
<comment type="subunit">
    <text evidence="1">Monomer.</text>
</comment>
<comment type="subcellular location">
    <subcellularLocation>
        <location evidence="1">Cytoplasm</location>
    </subcellularLocation>
</comment>
<comment type="similarity">
    <text evidence="1">Belongs to the class-I aminoacyl-tRNA synthetase family.</text>
</comment>
<organism>
    <name type="scientific">Campylobacter jejuni subsp. jejuni serotype O:6 (strain 81116 / NCTC 11828)</name>
    <dbReference type="NCBI Taxonomy" id="407148"/>
    <lineage>
        <taxon>Bacteria</taxon>
        <taxon>Pseudomonadati</taxon>
        <taxon>Campylobacterota</taxon>
        <taxon>Epsilonproteobacteria</taxon>
        <taxon>Campylobacterales</taxon>
        <taxon>Campylobacteraceae</taxon>
        <taxon>Campylobacter</taxon>
    </lineage>
</organism>
<name>SYR_CAMJ8</name>
<sequence length="530" mass="60288">MKSIIFNEIKKILECDFTLENPKDKNLAHFATPLAFSLAKELKKSPMLIASDLASKFQNHDCFESVEAVNGYLNFRISKTFLNELANQALANPNDFSKGEKKQESFLLEYVSANPTGPLHIGHARGAVFGDTLTRLARHLGYKFDTEYYVNDAGNQIYLLGLSILLSVKENILHENVEYPEQYYKGEYIADLAKEAFEKFGKEFFSEENIPSLADWAKDKMLILIKQNLEQAKIKIDSYVSERSYYDALNATLESLKEHKGIYEQEGKIWLASSQKGDEKDRVIIREDGRGTYLAADIVYHKDKMSRGYGKCINIWGADHHGYIPRMKAAMEFLGFDSNNLEIILAQMVSLLKDGEPYKMSKRAGNFILMSDVIDEIGSDALRYIFLSKKCDTHLEFDISDLQKEDSSNPVYYINYAHARIHQVFAKAGKKIDDVMRADLQSLNQDGVNLLFEALNLKAILNDAFEARALQKIPDYLKNLAANFHKFYNENKVVGSINENDLLKLFSLVALSIKTAFSLMGIEAKNKMEH</sequence>
<reference key="1">
    <citation type="journal article" date="2007" name="J. Bacteriol.">
        <title>The complete genome sequence of Campylobacter jejuni strain 81116 (NCTC11828).</title>
        <authorList>
            <person name="Pearson B.M."/>
            <person name="Gaskin D.J.H."/>
            <person name="Segers R.P.A.M."/>
            <person name="Wells J.M."/>
            <person name="Nuijten P.J.M."/>
            <person name="van Vliet A.H.M."/>
        </authorList>
    </citation>
    <scope>NUCLEOTIDE SEQUENCE [LARGE SCALE GENOMIC DNA]</scope>
    <source>
        <strain>81116 / NCTC 11828</strain>
    </source>
</reference>
<dbReference type="EC" id="6.1.1.19" evidence="1"/>
<dbReference type="EMBL" id="CP000814">
    <property type="protein sequence ID" value="ABV52718.1"/>
    <property type="molecule type" value="Genomic_DNA"/>
</dbReference>
<dbReference type="RefSeq" id="WP_002866187.1">
    <property type="nucleotide sequence ID" value="NC_009839.1"/>
</dbReference>
<dbReference type="SMR" id="A8FMN1"/>
<dbReference type="KEGG" id="cju:C8J_1119"/>
<dbReference type="HOGENOM" id="CLU_006406_0_1_7"/>
<dbReference type="GO" id="GO:0005737">
    <property type="term" value="C:cytoplasm"/>
    <property type="evidence" value="ECO:0007669"/>
    <property type="project" value="UniProtKB-SubCell"/>
</dbReference>
<dbReference type="GO" id="GO:0004814">
    <property type="term" value="F:arginine-tRNA ligase activity"/>
    <property type="evidence" value="ECO:0007669"/>
    <property type="project" value="UniProtKB-UniRule"/>
</dbReference>
<dbReference type="GO" id="GO:0005524">
    <property type="term" value="F:ATP binding"/>
    <property type="evidence" value="ECO:0007669"/>
    <property type="project" value="UniProtKB-UniRule"/>
</dbReference>
<dbReference type="GO" id="GO:0006420">
    <property type="term" value="P:arginyl-tRNA aminoacylation"/>
    <property type="evidence" value="ECO:0007669"/>
    <property type="project" value="UniProtKB-UniRule"/>
</dbReference>
<dbReference type="CDD" id="cd00671">
    <property type="entry name" value="ArgRS_core"/>
    <property type="match status" value="1"/>
</dbReference>
<dbReference type="FunFam" id="3.40.50.620:FF:000062">
    <property type="entry name" value="Arginine--tRNA ligase"/>
    <property type="match status" value="1"/>
</dbReference>
<dbReference type="Gene3D" id="3.30.1360.70">
    <property type="entry name" value="Arginyl tRNA synthetase N-terminal domain"/>
    <property type="match status" value="1"/>
</dbReference>
<dbReference type="Gene3D" id="3.40.50.620">
    <property type="entry name" value="HUPs"/>
    <property type="match status" value="1"/>
</dbReference>
<dbReference type="Gene3D" id="1.10.730.10">
    <property type="entry name" value="Isoleucyl-tRNA Synthetase, Domain 1"/>
    <property type="match status" value="1"/>
</dbReference>
<dbReference type="HAMAP" id="MF_00123">
    <property type="entry name" value="Arg_tRNA_synth"/>
    <property type="match status" value="1"/>
</dbReference>
<dbReference type="InterPro" id="IPR001412">
    <property type="entry name" value="aa-tRNA-synth_I_CS"/>
</dbReference>
<dbReference type="InterPro" id="IPR001278">
    <property type="entry name" value="Arg-tRNA-ligase"/>
</dbReference>
<dbReference type="InterPro" id="IPR005148">
    <property type="entry name" value="Arg-tRNA-synth_N"/>
</dbReference>
<dbReference type="InterPro" id="IPR036695">
    <property type="entry name" value="Arg-tRNA-synth_N_sf"/>
</dbReference>
<dbReference type="InterPro" id="IPR035684">
    <property type="entry name" value="ArgRS_core"/>
</dbReference>
<dbReference type="InterPro" id="IPR008909">
    <property type="entry name" value="DALR_anticod-bd"/>
</dbReference>
<dbReference type="InterPro" id="IPR014729">
    <property type="entry name" value="Rossmann-like_a/b/a_fold"/>
</dbReference>
<dbReference type="InterPro" id="IPR009080">
    <property type="entry name" value="tRNAsynth_Ia_anticodon-bd"/>
</dbReference>
<dbReference type="NCBIfam" id="TIGR00456">
    <property type="entry name" value="argS"/>
    <property type="match status" value="1"/>
</dbReference>
<dbReference type="PANTHER" id="PTHR11956:SF5">
    <property type="entry name" value="ARGININE--TRNA LIGASE, CYTOPLASMIC"/>
    <property type="match status" value="1"/>
</dbReference>
<dbReference type="PANTHER" id="PTHR11956">
    <property type="entry name" value="ARGINYL-TRNA SYNTHETASE"/>
    <property type="match status" value="1"/>
</dbReference>
<dbReference type="Pfam" id="PF03485">
    <property type="entry name" value="Arg_tRNA_synt_N"/>
    <property type="match status" value="1"/>
</dbReference>
<dbReference type="Pfam" id="PF05746">
    <property type="entry name" value="DALR_1"/>
    <property type="match status" value="1"/>
</dbReference>
<dbReference type="Pfam" id="PF00750">
    <property type="entry name" value="tRNA-synt_1d"/>
    <property type="match status" value="1"/>
</dbReference>
<dbReference type="PRINTS" id="PR01038">
    <property type="entry name" value="TRNASYNTHARG"/>
</dbReference>
<dbReference type="SMART" id="SM01016">
    <property type="entry name" value="Arg_tRNA_synt_N"/>
    <property type="match status" value="1"/>
</dbReference>
<dbReference type="SMART" id="SM00836">
    <property type="entry name" value="DALR_1"/>
    <property type="match status" value="1"/>
</dbReference>
<dbReference type="SUPFAM" id="SSF47323">
    <property type="entry name" value="Anticodon-binding domain of a subclass of class I aminoacyl-tRNA synthetases"/>
    <property type="match status" value="1"/>
</dbReference>
<dbReference type="SUPFAM" id="SSF55190">
    <property type="entry name" value="Arginyl-tRNA synthetase (ArgRS), N-terminal 'additional' domain"/>
    <property type="match status" value="1"/>
</dbReference>
<dbReference type="SUPFAM" id="SSF52374">
    <property type="entry name" value="Nucleotidylyl transferase"/>
    <property type="match status" value="1"/>
</dbReference>
<dbReference type="PROSITE" id="PS00178">
    <property type="entry name" value="AA_TRNA_LIGASE_I"/>
    <property type="match status" value="1"/>
</dbReference>
<proteinExistence type="inferred from homology"/>
<gene>
    <name evidence="1" type="primary">argS</name>
    <name type="ordered locus">C8J_1119</name>
</gene>
<feature type="chain" id="PRO_1000071394" description="Arginine--tRNA ligase">
    <location>
        <begin position="1"/>
        <end position="530"/>
    </location>
</feature>
<feature type="short sequence motif" description="'HIGH' region">
    <location>
        <begin position="113"/>
        <end position="123"/>
    </location>
</feature>
<keyword id="KW-0030">Aminoacyl-tRNA synthetase</keyword>
<keyword id="KW-0067">ATP-binding</keyword>
<keyword id="KW-0963">Cytoplasm</keyword>
<keyword id="KW-0436">Ligase</keyword>
<keyword id="KW-0547">Nucleotide-binding</keyword>
<keyword id="KW-0648">Protein biosynthesis</keyword>
<protein>
    <recommendedName>
        <fullName evidence="1">Arginine--tRNA ligase</fullName>
        <ecNumber evidence="1">6.1.1.19</ecNumber>
    </recommendedName>
    <alternativeName>
        <fullName evidence="1">Arginyl-tRNA synthetase</fullName>
        <shortName evidence="1">ArgRS</shortName>
    </alternativeName>
</protein>
<accession>A8FMN1</accession>